<accession>Q74FW8</accession>
<name>GCH4_GEOSL</name>
<feature type="chain" id="PRO_0000147710" description="GTP cyclohydrolase FolE2">
    <location>
        <begin position="1"/>
        <end position="258"/>
    </location>
</feature>
<feature type="site" description="May be catalytically important" evidence="1">
    <location>
        <position position="144"/>
    </location>
</feature>
<evidence type="ECO:0000255" key="1">
    <source>
        <dbReference type="HAMAP-Rule" id="MF_01527"/>
    </source>
</evidence>
<proteinExistence type="inferred from homology"/>
<gene>
    <name evidence="1" type="primary">folE2</name>
    <name type="ordered locus">GSU0484</name>
</gene>
<protein>
    <recommendedName>
        <fullName evidence="1">GTP cyclohydrolase FolE2</fullName>
        <ecNumber evidence="1">3.5.4.16</ecNumber>
    </recommendedName>
</protein>
<reference key="1">
    <citation type="journal article" date="2003" name="Science">
        <title>Genome of Geobacter sulfurreducens: metal reduction in subsurface environments.</title>
        <authorList>
            <person name="Methe B.A."/>
            <person name="Nelson K.E."/>
            <person name="Eisen J.A."/>
            <person name="Paulsen I.T."/>
            <person name="Nelson W.C."/>
            <person name="Heidelberg J.F."/>
            <person name="Wu D."/>
            <person name="Wu M."/>
            <person name="Ward N.L."/>
            <person name="Beanan M.J."/>
            <person name="Dodson R.J."/>
            <person name="Madupu R."/>
            <person name="Brinkac L.M."/>
            <person name="Daugherty S.C."/>
            <person name="DeBoy R.T."/>
            <person name="Durkin A.S."/>
            <person name="Gwinn M.L."/>
            <person name="Kolonay J.F."/>
            <person name="Sullivan S.A."/>
            <person name="Haft D.H."/>
            <person name="Selengut J."/>
            <person name="Davidsen T.M."/>
            <person name="Zafar N."/>
            <person name="White O."/>
            <person name="Tran B."/>
            <person name="Romero C."/>
            <person name="Forberger H.A."/>
            <person name="Weidman J.F."/>
            <person name="Khouri H.M."/>
            <person name="Feldblyum T.V."/>
            <person name="Utterback T.R."/>
            <person name="Van Aken S.E."/>
            <person name="Lovley D.R."/>
            <person name="Fraser C.M."/>
        </authorList>
    </citation>
    <scope>NUCLEOTIDE SEQUENCE [LARGE SCALE GENOMIC DNA]</scope>
    <source>
        <strain>ATCC 51573 / DSM 12127 / PCA</strain>
    </source>
</reference>
<sequence>MPDMQTSRDTRKIPISKVGVKDISYPIVVMDKNRKFQQTVARVNMYVDLPHHFKGTHMSRFIEILNAYREDIALDKMEPILQEMKKKLGASSAHLEIEFPYFIEKRAPVSGARSLMEYTCTFTGTLAETFDFVLGVQVPVTSLCPCSKELSRYGAHNQRSHITVRVRYAGFVWIEELVELIEGCGSSPVWSLLKRADEKFVTERAYENPKFVEDIVREATLALAAHEAITWFSVEAENFESIHKHSAYAAIEQDKRKA</sequence>
<keyword id="KW-0378">Hydrolase</keyword>
<keyword id="KW-1185">Reference proteome</keyword>
<dbReference type="EC" id="3.5.4.16" evidence="1"/>
<dbReference type="EMBL" id="AE017180">
    <property type="protein sequence ID" value="AAR33816.1"/>
    <property type="molecule type" value="Genomic_DNA"/>
</dbReference>
<dbReference type="RefSeq" id="NP_951543.3">
    <property type="nucleotide sequence ID" value="NC_002939.5"/>
</dbReference>
<dbReference type="RefSeq" id="WP_010941152.1">
    <property type="nucleotide sequence ID" value="NC_002939.5"/>
</dbReference>
<dbReference type="SMR" id="Q74FW8"/>
<dbReference type="STRING" id="243231.GSU0484"/>
<dbReference type="EnsemblBacteria" id="AAR33816">
    <property type="protein sequence ID" value="AAR33816"/>
    <property type="gene ID" value="GSU0484"/>
</dbReference>
<dbReference type="KEGG" id="gsu:GSU0484"/>
<dbReference type="PATRIC" id="fig|243231.5.peg.483"/>
<dbReference type="eggNOG" id="COG1469">
    <property type="taxonomic scope" value="Bacteria"/>
</dbReference>
<dbReference type="HOGENOM" id="CLU_062816_1_1_7"/>
<dbReference type="InParanoid" id="Q74FW8"/>
<dbReference type="OrthoDB" id="9774824at2"/>
<dbReference type="UniPathway" id="UPA00848">
    <property type="reaction ID" value="UER00151"/>
</dbReference>
<dbReference type="Proteomes" id="UP000000577">
    <property type="component" value="Chromosome"/>
</dbReference>
<dbReference type="GO" id="GO:0003933">
    <property type="term" value="F:GTP cyclohydrolase activity"/>
    <property type="evidence" value="ECO:0000318"/>
    <property type="project" value="GO_Central"/>
</dbReference>
<dbReference type="GO" id="GO:0003934">
    <property type="term" value="F:GTP cyclohydrolase I activity"/>
    <property type="evidence" value="ECO:0007669"/>
    <property type="project" value="UniProtKB-UniRule"/>
</dbReference>
<dbReference type="GO" id="GO:0046654">
    <property type="term" value="P:tetrahydrofolate biosynthetic process"/>
    <property type="evidence" value="ECO:0007669"/>
    <property type="project" value="UniProtKB-UniRule"/>
</dbReference>
<dbReference type="Gene3D" id="3.10.270.10">
    <property type="entry name" value="Urate Oxidase"/>
    <property type="match status" value="1"/>
</dbReference>
<dbReference type="HAMAP" id="MF_01527_B">
    <property type="entry name" value="GTP_cyclohydrol_B"/>
    <property type="match status" value="1"/>
</dbReference>
<dbReference type="InterPro" id="IPR022838">
    <property type="entry name" value="GTP_cyclohydrolase_FolE2"/>
</dbReference>
<dbReference type="InterPro" id="IPR003801">
    <property type="entry name" value="GTP_cyclohydrolase_FolE2/MptA"/>
</dbReference>
<dbReference type="NCBIfam" id="NF010200">
    <property type="entry name" value="PRK13674.1-1"/>
    <property type="match status" value="1"/>
</dbReference>
<dbReference type="PANTHER" id="PTHR36445">
    <property type="entry name" value="GTP CYCLOHYDROLASE MPTA"/>
    <property type="match status" value="1"/>
</dbReference>
<dbReference type="PANTHER" id="PTHR36445:SF1">
    <property type="entry name" value="GTP CYCLOHYDROLASE MPTA"/>
    <property type="match status" value="1"/>
</dbReference>
<dbReference type="Pfam" id="PF02649">
    <property type="entry name" value="GCHY-1"/>
    <property type="match status" value="1"/>
</dbReference>
<comment type="function">
    <text evidence="1">Converts GTP to 7,8-dihydroneopterin triphosphate.</text>
</comment>
<comment type="catalytic activity">
    <reaction evidence="1">
        <text>GTP + H2O = 7,8-dihydroneopterin 3'-triphosphate + formate + H(+)</text>
        <dbReference type="Rhea" id="RHEA:17473"/>
        <dbReference type="ChEBI" id="CHEBI:15377"/>
        <dbReference type="ChEBI" id="CHEBI:15378"/>
        <dbReference type="ChEBI" id="CHEBI:15740"/>
        <dbReference type="ChEBI" id="CHEBI:37565"/>
        <dbReference type="ChEBI" id="CHEBI:58462"/>
        <dbReference type="EC" id="3.5.4.16"/>
    </reaction>
</comment>
<comment type="pathway">
    <text evidence="1">Cofactor biosynthesis; 7,8-dihydroneopterin triphosphate biosynthesis; 7,8-dihydroneopterin triphosphate from GTP: step 1/1.</text>
</comment>
<comment type="similarity">
    <text evidence="1">Belongs to the GTP cyclohydrolase IV family.</text>
</comment>
<organism>
    <name type="scientific">Geobacter sulfurreducens (strain ATCC 51573 / DSM 12127 / PCA)</name>
    <dbReference type="NCBI Taxonomy" id="243231"/>
    <lineage>
        <taxon>Bacteria</taxon>
        <taxon>Pseudomonadati</taxon>
        <taxon>Thermodesulfobacteriota</taxon>
        <taxon>Desulfuromonadia</taxon>
        <taxon>Geobacterales</taxon>
        <taxon>Geobacteraceae</taxon>
        <taxon>Geobacter</taxon>
    </lineage>
</organism>